<proteinExistence type="evidence at protein level"/>
<comment type="function">
    <text evidence="1 4 7">Ribosome biogenesis factor that coordinates hyperactive transcription and ribogenesis (PubMed:17699751). Part of the small subunit (SSU) processome, first precursor of the small eukaryotic ribosomal subunit. During the assembly of the SSU processome in the nucleolus, many ribosome biogenesis factors, an RNA chaperone and ribosomal proteins associate with the nascent pre-rRNA and work in concert to generate RNA folding, modifications, rearrangements and cleavage as well as targeted degradation of pre-ribosomal RNA by the RNA exosome. Involved in nucleolar processing of pre-18S ribosomal RNA. Required for optimal pre-ribosomal RNA transcription by RNA polymerase I (PubMed:17699751, PubMed:34516797). Essential for stem cell pluripotency and embryonic development. In the nucleoplasm, recruited by promoter-associated/nascent transcripts and transcription to active promoters where it facilitates releases of elongation factor P-TEFb and paused RNA polymerase II to allow transcription elongation and maintain high-level expression of its targets genes (By similarity).</text>
</comment>
<comment type="subunit">
    <text evidence="1 5 7 9 10">Part of the small subunit (SSU) processome, composed of more than 70 proteins and the RNA chaperone small nucleolar RNA (snoRNA) U3 (PubMed:34516797). May be a component of the proposed t-UTP subcomplex of the ribosomal small subunit (SSU) processome containing at least UTP4, WDR43, HEATR1, UTP15, WDR75 (PubMed:17699751, PubMed:22916032). Binds to RNA; binding is required for its chromatin association. Interacts with CDK9, DDX21 and SUPT6H. Interacts with RNA polymerase II (By similarity). Interacts directly with UTP4 and UTP15 (PubMed:24219289).</text>
</comment>
<comment type="interaction">
    <interactant intactId="EBI-2563523">
        <id>Q15061</id>
    </interactant>
    <interactant intactId="EBI-1048301">
        <id>Q8TED0</id>
        <label>UTP15</label>
    </interactant>
    <organismsDiffer>false</organismsDiffer>
    <experiments>2</experiments>
</comment>
<comment type="interaction">
    <interactant intactId="EBI-2563523">
        <id>Q15061</id>
    </interactant>
    <interactant intactId="EBI-2602591">
        <id>Q969X6</id>
        <label>UTP4</label>
    </interactant>
    <organismsDiffer>false</organismsDiffer>
    <experiments>6</experiments>
</comment>
<comment type="subcellular location">
    <subcellularLocation>
        <location evidence="3 5 7">Nucleus</location>
        <location evidence="3 5 7">Nucleolus</location>
    </subcellularLocation>
    <subcellularLocation>
        <location evidence="5">Nucleus</location>
        <location evidence="5">Nucleolus fibrillar center</location>
    </subcellularLocation>
    <subcellularLocation>
        <location evidence="1">Nucleus</location>
        <location evidence="1">Nucleoplasm</location>
    </subcellularLocation>
</comment>
<comment type="developmental stage">
    <text evidence="6">Expressed during embryonic development, expression decreases at blastocyst stage.</text>
</comment>
<comment type="domain">
    <text evidence="1">N-terminal domain is required for nucleoplasm location and C-terminal domain for nucleolus location.</text>
</comment>
<comment type="similarity">
    <text evidence="8">Belongs to the UTP5 family.</text>
</comment>
<comment type="sequence caution" evidence="8">
    <conflict type="erroneous initiation">
        <sequence resource="EMBL-CDS" id="BAA05499"/>
    </conflict>
    <text>Extended N-terminus.</text>
</comment>
<comment type="sequence caution" evidence="8">
    <conflict type="frameshift">
        <sequence resource="EMBL-CDS" id="BAA05499"/>
    </conflict>
</comment>
<reference key="1">
    <citation type="journal article" date="1994" name="DNA Res.">
        <title>Prediction of the coding sequences of unidentified human genes. I. The coding sequences of 40 new genes (KIAA0001-KIAA0040) deduced by analysis of randomly sampled cDNA clones from human immature myeloid cell line KG-1.</title>
        <authorList>
            <person name="Nomura N."/>
            <person name="Miyajima N."/>
            <person name="Sazuka T."/>
            <person name="Tanaka A."/>
            <person name="Kawarabayasi Y."/>
            <person name="Sato S."/>
            <person name="Nagase T."/>
            <person name="Seki N."/>
            <person name="Ishikawa K."/>
            <person name="Tabata S."/>
        </authorList>
    </citation>
    <scope>NUCLEOTIDE SEQUENCE [LARGE SCALE MRNA]</scope>
    <source>
        <tissue>Bone marrow</tissue>
    </source>
</reference>
<reference key="2">
    <citation type="journal article" date="2002" name="Mol. Biol. Cell">
        <title>Functional proteomic analysis of human nucleolus.</title>
        <authorList>
            <person name="Scherl A."/>
            <person name="Coute Y."/>
            <person name="Deon C."/>
            <person name="Calle A."/>
            <person name="Kindbeiter K."/>
            <person name="Sanchez J.-C."/>
            <person name="Greco A."/>
            <person name="Hochstrasser D.F."/>
            <person name="Diaz J.-J."/>
        </authorList>
    </citation>
    <scope>SUBCELLULAR LOCATION [LARGE SCALE ANALYSIS]</scope>
    <source>
        <tissue>Cervix carcinoma</tissue>
    </source>
</reference>
<reference key="3">
    <citation type="journal article" date="2006" name="Cell">
        <title>Global, in vivo, and site-specific phosphorylation dynamics in signaling networks.</title>
        <authorList>
            <person name="Olsen J.V."/>
            <person name="Blagoev B."/>
            <person name="Gnad F."/>
            <person name="Macek B."/>
            <person name="Kumar C."/>
            <person name="Mortensen P."/>
            <person name="Mann M."/>
        </authorList>
    </citation>
    <scope>PHOSPHORYLATION [LARGE SCALE ANALYSIS] AT SER-77</scope>
    <scope>IDENTIFICATION BY MASS SPECTROMETRY [LARGE SCALE ANALYSIS]</scope>
    <source>
        <tissue>Cervix carcinoma</tissue>
    </source>
</reference>
<reference key="4">
    <citation type="journal article" date="2006" name="Nat. Biotechnol.">
        <title>A probability-based approach for high-throughput protein phosphorylation analysis and site localization.</title>
        <authorList>
            <person name="Beausoleil S.A."/>
            <person name="Villen J."/>
            <person name="Gerber S.A."/>
            <person name="Rush J."/>
            <person name="Gygi S.P."/>
        </authorList>
    </citation>
    <scope>PHOSPHORYLATION [LARGE SCALE ANALYSIS] AT SER-431</scope>
    <scope>IDENTIFICATION BY MASS SPECTROMETRY [LARGE SCALE ANALYSIS]</scope>
    <source>
        <tissue>Cervix carcinoma</tissue>
    </source>
</reference>
<reference key="5">
    <citation type="journal article" date="2007" name="Genes Dev.">
        <title>Recruitment of factors linking transcription and processing of pre-rRNA to NOR chromatin is UBF-dependent and occurs independent of transcription in human cells.</title>
        <authorList>
            <person name="Prieto J.L."/>
            <person name="McStay B."/>
        </authorList>
    </citation>
    <scope>FUNCTION</scope>
    <scope>SUBUNIT</scope>
</reference>
<reference key="6">
    <citation type="journal article" date="2008" name="Proc. Natl. Acad. Sci. U.S.A.">
        <title>A quantitative atlas of mitotic phosphorylation.</title>
        <authorList>
            <person name="Dephoure N."/>
            <person name="Zhou C."/>
            <person name="Villen J."/>
            <person name="Beausoleil S.A."/>
            <person name="Bakalarski C.E."/>
            <person name="Elledge S.J."/>
            <person name="Gygi S.P."/>
        </authorList>
    </citation>
    <scope>PHOSPHORYLATION [LARGE SCALE ANALYSIS] AT SER-431</scope>
    <scope>IDENTIFICATION BY MASS SPECTROMETRY [LARGE SCALE ANALYSIS]</scope>
    <source>
        <tissue>Cervix carcinoma</tissue>
    </source>
</reference>
<reference key="7">
    <citation type="journal article" date="2010" name="Sci. Signal.">
        <title>Quantitative phosphoproteomics reveals widespread full phosphorylation site occupancy during mitosis.</title>
        <authorList>
            <person name="Olsen J.V."/>
            <person name="Vermeulen M."/>
            <person name="Santamaria A."/>
            <person name="Kumar C."/>
            <person name="Miller M.L."/>
            <person name="Jensen L.J."/>
            <person name="Gnad F."/>
            <person name="Cox J."/>
            <person name="Jensen T.S."/>
            <person name="Nigg E.A."/>
            <person name="Brunak S."/>
            <person name="Mann M."/>
        </authorList>
    </citation>
    <scope>PHOSPHORYLATION [LARGE SCALE ANALYSIS] AT SER-77; THR-394; SER-399; SER-431; THR-656 AND SER-658</scope>
    <scope>IDENTIFICATION BY MASS SPECTROMETRY [LARGE SCALE ANALYSIS]</scope>
    <source>
        <tissue>Cervix carcinoma</tissue>
    </source>
</reference>
<reference key="8">
    <citation type="journal article" date="2011" name="BMC Syst. Biol.">
        <title>Initial characterization of the human central proteome.</title>
        <authorList>
            <person name="Burkard T.R."/>
            <person name="Planyavsky M."/>
            <person name="Kaupe I."/>
            <person name="Breitwieser F.P."/>
            <person name="Buerckstuemmer T."/>
            <person name="Bennett K.L."/>
            <person name="Superti-Furga G."/>
            <person name="Colinge J."/>
        </authorList>
    </citation>
    <scope>IDENTIFICATION BY MASS SPECTROMETRY [LARGE SCALE ANALYSIS]</scope>
</reference>
<reference key="9">
    <citation type="journal article" date="2011" name="Sci. Signal.">
        <title>System-wide temporal characterization of the proteome and phosphoproteome of human embryonic stem cell differentiation.</title>
        <authorList>
            <person name="Rigbolt K.T."/>
            <person name="Prokhorova T.A."/>
            <person name="Akimov V."/>
            <person name="Henningsen J."/>
            <person name="Johansen P.T."/>
            <person name="Kratchmarova I."/>
            <person name="Kassem M."/>
            <person name="Mann M."/>
            <person name="Olsen J.V."/>
            <person name="Blagoev B."/>
        </authorList>
    </citation>
    <scope>PHOSPHORYLATION [LARGE SCALE ANALYSIS] AT SER-77; SER-431; SER-437; SER-590; THR-656 AND SER-658</scope>
    <scope>IDENTIFICATION BY MASS SPECTROMETRY [LARGE SCALE ANALYSIS]</scope>
</reference>
<reference key="10">
    <citation type="journal article" date="2012" name="PLoS Genet.">
        <title>NOL11, implicated in the pathogenesis of North American Indian childhood cirrhosis, is required for pre-rRNA transcription and processing.</title>
        <authorList>
            <person name="Freed E.F."/>
            <person name="Prieto J.L."/>
            <person name="McCann K.L."/>
            <person name="McStay B."/>
            <person name="Baserga S.J."/>
        </authorList>
    </citation>
    <scope>POSSIBLE ASSOCIATION IN THE SSU PROCESSOME T-UTP SUBCOMPLEX</scope>
</reference>
<reference key="11">
    <citation type="journal article" date="2013" name="Biochem. Cell Biol.">
        <title>Interaction, mobility, and phosphorylation of human orthologues of WD repeat-containing components of the yeast SSU processome t-UTP sub-complex.</title>
        <authorList>
            <person name="Sato M."/>
            <person name="Araki N."/>
            <person name="Kumeta M."/>
            <person name="Takeyasu K."/>
            <person name="Taguchi Y."/>
            <person name="Asai T."/>
            <person name="Furukawa K."/>
            <person name="Horigome T."/>
        </authorList>
    </citation>
    <scope>SUBCELLULAR LOCATION</scope>
    <scope>INTERACTION WITH UTP4 AND UTP15</scope>
</reference>
<reference key="12">
    <citation type="journal article" date="2013" name="J. Proteome Res.">
        <title>Toward a comprehensive characterization of a human cancer cell phosphoproteome.</title>
        <authorList>
            <person name="Zhou H."/>
            <person name="Di Palma S."/>
            <person name="Preisinger C."/>
            <person name="Peng M."/>
            <person name="Polat A.N."/>
            <person name="Heck A.J."/>
            <person name="Mohammed S."/>
        </authorList>
    </citation>
    <scope>PHOSPHORYLATION [LARGE SCALE ANALYSIS] AT THR-321; THR-394 AND SER-431</scope>
    <scope>IDENTIFICATION BY MASS SPECTROMETRY [LARGE SCALE ANALYSIS]</scope>
    <source>
        <tissue>Cervix carcinoma</tissue>
        <tissue>Erythroleukemia</tissue>
    </source>
</reference>
<reference key="13">
    <citation type="journal article" date="2014" name="Proc. Natl. Acad. Sci. U.S.A.">
        <title>Mapping of SUMO sites and analysis of SUMOylation changes induced by external stimuli.</title>
        <authorList>
            <person name="Impens F."/>
            <person name="Radoshevich L."/>
            <person name="Cossart P."/>
            <person name="Ribet D."/>
        </authorList>
    </citation>
    <scope>SUMOYLATION [LARGE SCALE ANALYSIS] AT LYS-309 AND LYS-384</scope>
    <scope>IDENTIFICATION BY MASS SPECTROMETRY [LARGE SCALE ANALYSIS]</scope>
</reference>
<reference key="14">
    <citation type="journal article" date="2017" name="Nat. Struct. Mol. Biol.">
        <title>Site-specific mapping of the human SUMO proteome reveals co-modification with phosphorylation.</title>
        <authorList>
            <person name="Hendriks I.A."/>
            <person name="Lyon D."/>
            <person name="Young C."/>
            <person name="Jensen L.J."/>
            <person name="Vertegaal A.C."/>
            <person name="Nielsen M.L."/>
        </authorList>
    </citation>
    <scope>SUMOYLATION [LARGE SCALE ANALYSIS] AT LYS-309 AND LYS-384</scope>
    <scope>IDENTIFICATION BY MASS SPECTROMETRY [LARGE SCALE ANALYSIS]</scope>
</reference>
<reference key="15">
    <citation type="journal article" date="2019" name="Mol. Cell">
        <title>RNA Targets Ribogenesis Factor WDR43 to Chromatin for Transcription and Pluripotency Control.</title>
        <authorList>
            <person name="Bi X."/>
            <person name="Xu Y."/>
            <person name="Li T."/>
            <person name="Li X."/>
            <person name="Li W."/>
            <person name="Shao W."/>
            <person name="Wang K."/>
            <person name="Zhan G."/>
            <person name="Wu Z."/>
            <person name="Liu W."/>
            <person name="Lu J.Y."/>
            <person name="Wang L."/>
            <person name="Zhao J."/>
            <person name="Wu J."/>
            <person name="Na J."/>
            <person name="Li G."/>
            <person name="Li P."/>
            <person name="Shen X."/>
        </authorList>
    </citation>
    <scope>FUNCTION</scope>
    <scope>RNA-BINDING</scope>
    <scope>DEVELOPMENTAL STAGE</scope>
</reference>
<reference evidence="12 13 14" key="16">
    <citation type="journal article" date="2021" name="Science">
        <title>Nucleolar maturation of the human small subunit processome.</title>
        <authorList>
            <person name="Singh S."/>
            <person name="Vanden Broeck A."/>
            <person name="Miller L."/>
            <person name="Chaker-Margot M."/>
            <person name="Klinge S."/>
        </authorList>
    </citation>
    <scope>STRUCTURE BY ELECTRON MICROSCOPY (2.70 ANGSTROMS)</scope>
    <scope>FUNCTION</scope>
    <scope>SUBUNIT</scope>
    <scope>SUBCELLULAR LOCATION</scope>
</reference>
<accession>Q15061</accession>
<accession>Q15395</accession>
<accession>Q92577</accession>
<feature type="chain" id="PRO_0000051392" description="WD repeat-containing protein 43">
    <location>
        <begin position="1"/>
        <end position="677"/>
    </location>
</feature>
<feature type="repeat" description="WD 1">
    <location>
        <begin position="11"/>
        <end position="51"/>
    </location>
</feature>
<feature type="repeat" description="WD 2">
    <location>
        <begin position="57"/>
        <end position="119"/>
    </location>
</feature>
<feature type="repeat" description="WD 3">
    <location>
        <begin position="124"/>
        <end position="163"/>
    </location>
</feature>
<feature type="repeat" description="WD 4">
    <location>
        <begin position="166"/>
        <end position="205"/>
    </location>
</feature>
<feature type="repeat" description="WD 5">
    <location>
        <begin position="207"/>
        <end position="259"/>
    </location>
</feature>
<feature type="repeat" description="WD 6">
    <location>
        <begin position="267"/>
        <end position="309"/>
    </location>
</feature>
<feature type="region of interest" description="Disordered" evidence="2">
    <location>
        <begin position="414"/>
        <end position="445"/>
    </location>
</feature>
<feature type="region of interest" description="Disordered" evidence="2">
    <location>
        <begin position="582"/>
        <end position="677"/>
    </location>
</feature>
<feature type="compositionally biased region" description="Polar residues" evidence="2">
    <location>
        <begin position="582"/>
        <end position="592"/>
    </location>
</feature>
<feature type="compositionally biased region" description="Acidic residues" evidence="2">
    <location>
        <begin position="600"/>
        <end position="652"/>
    </location>
</feature>
<feature type="compositionally biased region" description="Basic and acidic residues" evidence="2">
    <location>
        <begin position="653"/>
        <end position="663"/>
    </location>
</feature>
<feature type="compositionally biased region" description="Acidic residues" evidence="2">
    <location>
        <begin position="664"/>
        <end position="677"/>
    </location>
</feature>
<feature type="modified residue" description="Phosphoserine" evidence="16 18 19">
    <location>
        <position position="77"/>
    </location>
</feature>
<feature type="modified residue" description="Phosphothreonine" evidence="20">
    <location>
        <position position="321"/>
    </location>
</feature>
<feature type="modified residue" description="Phosphothreonine" evidence="18 20">
    <location>
        <position position="394"/>
    </location>
</feature>
<feature type="modified residue" description="Phosphoserine" evidence="18">
    <location>
        <position position="399"/>
    </location>
</feature>
<feature type="modified residue" description="Phosphoserine" evidence="15 17 18 19 20">
    <location>
        <position position="431"/>
    </location>
</feature>
<feature type="modified residue" description="Phosphoserine" evidence="19">
    <location>
        <position position="437"/>
    </location>
</feature>
<feature type="modified residue" description="Phosphoserine" evidence="19">
    <location>
        <position position="590"/>
    </location>
</feature>
<feature type="modified residue" description="Phosphothreonine" evidence="18 19">
    <location>
        <position position="656"/>
    </location>
</feature>
<feature type="modified residue" description="Phosphoserine" evidence="18 19">
    <location>
        <position position="658"/>
    </location>
</feature>
<feature type="cross-link" description="Glycyl lysine isopeptide (Lys-Gly) (interchain with G-Cter in SUMO1); alternate" evidence="21">
    <location>
        <position position="309"/>
    </location>
</feature>
<feature type="cross-link" description="Glycyl lysine isopeptide (Lys-Gly) (interchain with G-Cter in SUMO2); alternate" evidence="22">
    <location>
        <position position="309"/>
    </location>
</feature>
<feature type="cross-link" description="Glycyl lysine isopeptide (Lys-Gly) (interchain with G-Cter in SUMO1); alternate" evidence="21">
    <location>
        <position position="384"/>
    </location>
</feature>
<feature type="cross-link" description="Glycyl lysine isopeptide (Lys-Gly) (interchain with G-Cter in SUMO2); alternate" evidence="22">
    <location>
        <position position="384"/>
    </location>
</feature>
<name>WDR43_HUMAN</name>
<organism>
    <name type="scientific">Homo sapiens</name>
    <name type="common">Human</name>
    <dbReference type="NCBI Taxonomy" id="9606"/>
    <lineage>
        <taxon>Eukaryota</taxon>
        <taxon>Metazoa</taxon>
        <taxon>Chordata</taxon>
        <taxon>Craniata</taxon>
        <taxon>Vertebrata</taxon>
        <taxon>Euteleostomi</taxon>
        <taxon>Mammalia</taxon>
        <taxon>Eutheria</taxon>
        <taxon>Euarchontoglires</taxon>
        <taxon>Primates</taxon>
        <taxon>Haplorrhini</taxon>
        <taxon>Catarrhini</taxon>
        <taxon>Hominidae</taxon>
        <taxon>Homo</taxon>
    </lineage>
</organism>
<protein>
    <recommendedName>
        <fullName>WD repeat-containing protein 43</fullName>
    </recommendedName>
    <alternativeName>
        <fullName>U3 small nucleolar RNA-associated protein 5 homolog</fullName>
    </alternativeName>
</protein>
<keyword id="KW-0002">3D-structure</keyword>
<keyword id="KW-1017">Isopeptide bond</keyword>
<keyword id="KW-0539">Nucleus</keyword>
<keyword id="KW-0597">Phosphoprotein</keyword>
<keyword id="KW-1267">Proteomics identification</keyword>
<keyword id="KW-1185">Reference proteome</keyword>
<keyword id="KW-0677">Repeat</keyword>
<keyword id="KW-0690">Ribosome biogenesis</keyword>
<keyword id="KW-0694">RNA-binding</keyword>
<keyword id="KW-0698">rRNA processing</keyword>
<keyword id="KW-0804">Transcription</keyword>
<keyword id="KW-0805">Transcription regulation</keyword>
<keyword id="KW-0832">Ubl conjugation</keyword>
<keyword id="KW-0853">WD repeat</keyword>
<dbReference type="EMBL" id="D26488">
    <property type="protein sequence ID" value="BAA05499.1"/>
    <property type="status" value="ALT_INIT"/>
    <property type="molecule type" value="mRNA"/>
</dbReference>
<dbReference type="EMBL" id="D87716">
    <property type="protein sequence ID" value="BAA13441.1"/>
    <property type="status" value="ALT_FRAME"/>
    <property type="molecule type" value="mRNA"/>
</dbReference>
<dbReference type="CCDS" id="CCDS46251.1"/>
<dbReference type="RefSeq" id="NP_055946.1">
    <property type="nucleotide sequence ID" value="NM_015131.3"/>
</dbReference>
<dbReference type="PDB" id="7MQ8">
    <property type="method" value="EM"/>
    <property type="resolution" value="3.60 A"/>
    <property type="chains" value="LK/LL=1-677"/>
</dbReference>
<dbReference type="PDB" id="7MQ9">
    <property type="method" value="EM"/>
    <property type="resolution" value="3.87 A"/>
    <property type="chains" value="LK/LL=1-677"/>
</dbReference>
<dbReference type="PDB" id="7MQA">
    <property type="method" value="EM"/>
    <property type="resolution" value="2.70 A"/>
    <property type="chains" value="LK/LL=1-677"/>
</dbReference>
<dbReference type="PDBsum" id="7MQ8"/>
<dbReference type="PDBsum" id="7MQ9"/>
<dbReference type="PDBsum" id="7MQA"/>
<dbReference type="EMDB" id="EMD-23936"/>
<dbReference type="EMDB" id="EMD-23937"/>
<dbReference type="EMDB" id="EMD-23938"/>
<dbReference type="SMR" id="Q15061"/>
<dbReference type="BioGRID" id="116772">
    <property type="interactions" value="140"/>
</dbReference>
<dbReference type="ComplexPortal" id="CPX-2450">
    <property type="entry name" value="UTP-A complex"/>
</dbReference>
<dbReference type="CORUM" id="Q15061"/>
<dbReference type="FunCoup" id="Q15061">
    <property type="interactions" value="3367"/>
</dbReference>
<dbReference type="IntAct" id="Q15061">
    <property type="interactions" value="50"/>
</dbReference>
<dbReference type="MINT" id="Q15061"/>
<dbReference type="STRING" id="9606.ENSP00000384302"/>
<dbReference type="GlyCosmos" id="Q15061">
    <property type="glycosylation" value="1 site, 1 glycan"/>
</dbReference>
<dbReference type="GlyGen" id="Q15061">
    <property type="glycosylation" value="3 sites, 2 N-linked glycans (2 sites), 1 O-linked glycan (1 site)"/>
</dbReference>
<dbReference type="iPTMnet" id="Q15061"/>
<dbReference type="PhosphoSitePlus" id="Q15061"/>
<dbReference type="SwissPalm" id="Q15061"/>
<dbReference type="BioMuta" id="WDR43"/>
<dbReference type="DMDM" id="158518532"/>
<dbReference type="jPOST" id="Q15061"/>
<dbReference type="MassIVE" id="Q15061"/>
<dbReference type="PaxDb" id="9606-ENSP00000384302"/>
<dbReference type="PeptideAtlas" id="Q15061"/>
<dbReference type="ProteomicsDB" id="60416"/>
<dbReference type="Pumba" id="Q15061"/>
<dbReference type="Antibodypedia" id="51059">
    <property type="antibodies" value="76 antibodies from 14 providers"/>
</dbReference>
<dbReference type="DNASU" id="23160"/>
<dbReference type="Ensembl" id="ENST00000407426.8">
    <property type="protein sequence ID" value="ENSP00000384302.3"/>
    <property type="gene ID" value="ENSG00000163811.12"/>
</dbReference>
<dbReference type="GeneID" id="23160"/>
<dbReference type="KEGG" id="hsa:23160"/>
<dbReference type="MANE-Select" id="ENST00000407426.8">
    <property type="protein sequence ID" value="ENSP00000384302.3"/>
    <property type="RefSeq nucleotide sequence ID" value="NM_015131.3"/>
    <property type="RefSeq protein sequence ID" value="NP_055946.1"/>
</dbReference>
<dbReference type="UCSC" id="uc002rmo.3">
    <property type="organism name" value="human"/>
</dbReference>
<dbReference type="AGR" id="HGNC:28945"/>
<dbReference type="CTD" id="23160"/>
<dbReference type="DisGeNET" id="23160"/>
<dbReference type="GeneCards" id="WDR43"/>
<dbReference type="HGNC" id="HGNC:28945">
    <property type="gene designation" value="WDR43"/>
</dbReference>
<dbReference type="HPA" id="ENSG00000163811">
    <property type="expression patterns" value="Low tissue specificity"/>
</dbReference>
<dbReference type="MIM" id="616195">
    <property type="type" value="gene"/>
</dbReference>
<dbReference type="neXtProt" id="NX_Q15061"/>
<dbReference type="OpenTargets" id="ENSG00000163811"/>
<dbReference type="PharmGKB" id="PA134914163"/>
<dbReference type="VEuPathDB" id="HostDB:ENSG00000163811"/>
<dbReference type="eggNOG" id="KOG4547">
    <property type="taxonomic scope" value="Eukaryota"/>
</dbReference>
<dbReference type="GeneTree" id="ENSGT00390000004254"/>
<dbReference type="HOGENOM" id="CLU_020516_1_0_1"/>
<dbReference type="InParanoid" id="Q15061"/>
<dbReference type="OMA" id="PCTALTW"/>
<dbReference type="OrthoDB" id="30195at2759"/>
<dbReference type="PAN-GO" id="Q15061">
    <property type="GO annotations" value="2 GO annotations based on evolutionary models"/>
</dbReference>
<dbReference type="PhylomeDB" id="Q15061"/>
<dbReference type="TreeFam" id="TF313160"/>
<dbReference type="PathwayCommons" id="Q15061"/>
<dbReference type="Reactome" id="R-HSA-6790901">
    <property type="pathway name" value="rRNA modification in the nucleus and cytosol"/>
</dbReference>
<dbReference type="Reactome" id="R-HSA-6791226">
    <property type="pathway name" value="Major pathway of rRNA processing in the nucleolus and cytosol"/>
</dbReference>
<dbReference type="SignaLink" id="Q15061"/>
<dbReference type="BioGRID-ORCS" id="23160">
    <property type="hits" value="851 hits in 1165 CRISPR screens"/>
</dbReference>
<dbReference type="CD-CODE" id="91857CE7">
    <property type="entry name" value="Nucleolus"/>
</dbReference>
<dbReference type="ChiTaRS" id="WDR43">
    <property type="organism name" value="human"/>
</dbReference>
<dbReference type="GenomeRNAi" id="23160"/>
<dbReference type="Pharos" id="Q15061">
    <property type="development level" value="Tbio"/>
</dbReference>
<dbReference type="PRO" id="PR:Q15061"/>
<dbReference type="Proteomes" id="UP000005640">
    <property type="component" value="Chromosome 2"/>
</dbReference>
<dbReference type="RNAct" id="Q15061">
    <property type="molecule type" value="protein"/>
</dbReference>
<dbReference type="Bgee" id="ENSG00000163811">
    <property type="expression patterns" value="Expressed in buccal mucosa cell and 203 other cell types or tissues"/>
</dbReference>
<dbReference type="ExpressionAtlas" id="Q15061">
    <property type="expression patterns" value="baseline and differential"/>
</dbReference>
<dbReference type="GO" id="GO:0000785">
    <property type="term" value="C:chromatin"/>
    <property type="evidence" value="ECO:0000250"/>
    <property type="project" value="UniProtKB"/>
</dbReference>
<dbReference type="GO" id="GO:0001650">
    <property type="term" value="C:fibrillar center"/>
    <property type="evidence" value="ECO:0000314"/>
    <property type="project" value="UniProtKB"/>
</dbReference>
<dbReference type="GO" id="GO:0005730">
    <property type="term" value="C:nucleolus"/>
    <property type="evidence" value="ECO:0000314"/>
    <property type="project" value="UniProtKB"/>
</dbReference>
<dbReference type="GO" id="GO:0005654">
    <property type="term" value="C:nucleoplasm"/>
    <property type="evidence" value="ECO:0000250"/>
    <property type="project" value="UniProtKB"/>
</dbReference>
<dbReference type="GO" id="GO:0032040">
    <property type="term" value="C:small-subunit processome"/>
    <property type="evidence" value="ECO:0000314"/>
    <property type="project" value="UniProtKB"/>
</dbReference>
<dbReference type="GO" id="GO:0003723">
    <property type="term" value="F:RNA binding"/>
    <property type="evidence" value="ECO:0007005"/>
    <property type="project" value="UniProtKB"/>
</dbReference>
<dbReference type="GO" id="GO:0000993">
    <property type="term" value="F:RNA polymerase II complex binding"/>
    <property type="evidence" value="ECO:0000250"/>
    <property type="project" value="UniProtKB"/>
</dbReference>
<dbReference type="GO" id="GO:0003711">
    <property type="term" value="F:transcription elongation factor activity"/>
    <property type="evidence" value="ECO:0000250"/>
    <property type="project" value="UniProtKB"/>
</dbReference>
<dbReference type="GO" id="GO:0000462">
    <property type="term" value="P:maturation of SSU-rRNA from tricistronic rRNA transcript (SSU-rRNA, 5.8S rRNA, LSU-rRNA)"/>
    <property type="evidence" value="ECO:0000318"/>
    <property type="project" value="GO_Central"/>
</dbReference>
<dbReference type="GO" id="GO:2000234">
    <property type="term" value="P:positive regulation of rRNA processing"/>
    <property type="evidence" value="ECO:0000315"/>
    <property type="project" value="UniProtKB"/>
</dbReference>
<dbReference type="GO" id="GO:0045943">
    <property type="term" value="P:positive regulation of transcription by RNA polymerase I"/>
    <property type="evidence" value="ECO:0000315"/>
    <property type="project" value="UniProtKB"/>
</dbReference>
<dbReference type="GO" id="GO:2000036">
    <property type="term" value="P:regulation of stem cell population maintenance"/>
    <property type="evidence" value="ECO:0000250"/>
    <property type="project" value="UniProtKB"/>
</dbReference>
<dbReference type="GO" id="GO:0034243">
    <property type="term" value="P:regulation of transcription elongation by RNA polymerase II"/>
    <property type="evidence" value="ECO:0000250"/>
    <property type="project" value="UniProtKB"/>
</dbReference>
<dbReference type="GO" id="GO:0042274">
    <property type="term" value="P:ribosomal small subunit biogenesis"/>
    <property type="evidence" value="ECO:0000314"/>
    <property type="project" value="UniProtKB"/>
</dbReference>
<dbReference type="FunFam" id="2.130.10.10:FF:000468">
    <property type="entry name" value="WD repeat domain 43"/>
    <property type="match status" value="1"/>
</dbReference>
<dbReference type="FunFam" id="2.130.10.10:FF:000517">
    <property type="entry name" value="WD repeat-containing protein 43"/>
    <property type="match status" value="1"/>
</dbReference>
<dbReference type="Gene3D" id="2.130.10.10">
    <property type="entry name" value="YVTN repeat-like/Quinoprotein amine dehydrogenase"/>
    <property type="match status" value="2"/>
</dbReference>
<dbReference type="InterPro" id="IPR007148">
    <property type="entry name" value="SSU_processome_Utp12"/>
</dbReference>
<dbReference type="InterPro" id="IPR052414">
    <property type="entry name" value="U3_snoRNA-assoc_WDR"/>
</dbReference>
<dbReference type="InterPro" id="IPR015943">
    <property type="entry name" value="WD40/YVTN_repeat-like_dom_sf"/>
</dbReference>
<dbReference type="InterPro" id="IPR036322">
    <property type="entry name" value="WD40_repeat_dom_sf"/>
</dbReference>
<dbReference type="InterPro" id="IPR001680">
    <property type="entry name" value="WD40_rpt"/>
</dbReference>
<dbReference type="PANTHER" id="PTHR44267">
    <property type="entry name" value="WD REPEAT-CONTAINING PROTEIN 43"/>
    <property type="match status" value="1"/>
</dbReference>
<dbReference type="PANTHER" id="PTHR44267:SF1">
    <property type="entry name" value="WD REPEAT-CONTAINING PROTEIN 43"/>
    <property type="match status" value="1"/>
</dbReference>
<dbReference type="Pfam" id="PF04003">
    <property type="entry name" value="Utp12"/>
    <property type="match status" value="1"/>
</dbReference>
<dbReference type="Pfam" id="PF00400">
    <property type="entry name" value="WD40"/>
    <property type="match status" value="2"/>
</dbReference>
<dbReference type="SMART" id="SM00320">
    <property type="entry name" value="WD40"/>
    <property type="match status" value="5"/>
</dbReference>
<dbReference type="SUPFAM" id="SSF50978">
    <property type="entry name" value="WD40 repeat-like"/>
    <property type="match status" value="1"/>
</dbReference>
<dbReference type="PROSITE" id="PS50082">
    <property type="entry name" value="WD_REPEATS_2"/>
    <property type="match status" value="1"/>
</dbReference>
<dbReference type="PROSITE" id="PS50294">
    <property type="entry name" value="WD_REPEATS_REGION"/>
    <property type="match status" value="1"/>
</dbReference>
<sequence length="677" mass="74891">MAAGGGGSCDPLAPAGVPCAFSPHSQAYFALASTDGHLRVWETANNRLHQEYVPSAHLSGTCTCLAWAPARLQAKESPQRKKRKSEAVGMSNQTDLLALGTAVGSILLYSTVKGELHSKLISGGHDNRVNCIQWHQDSGCLYSCSDDKHIVEWNVQTCKVKCKWKGDNSSVSSLCISPDGKMLLSAGRTIKLWVLETKEVYRHFTGHATPVSSLMFTTIRPPNESQPFDGITGLYFLSGAVHDRLLNVWQVRSENKEKSAVMSFTVTDEPVYIDLTLSENKEEPVKLAVVCRDGQVHLFEHILNGYCKKPLTSNCTIQIATPGKGKKSTPKPIPILAAGFCSDKMSLLLVYGSWFQPTIERVALNSREPHMCLVRDISNCWAPKVETAITKVRTPVMNSEAKVLVPGIPGHHAAIKPAPPQTEQVESKRKSGGNEVSIEERLGAMDIDTHKKGKEDLQTNSFPVLLTQGLESNDFEMLNKVLQTRNVNLIKKTVLRMPLHTIIPLLQELTKRLQGHPNSAVLMVQWLKCVLTVHASYLSTLPDLVPQLGTLYQLMESRVKTFQKLSHLHGKLILLITQVTASEKTKGATSPGQKAKLVYEEESSEEESDDEIADKDSEDNWDEDEEESESEKDEDVEEEDEDAEGKDEENGEDRDTASEKELNGDSDLDPENESEEE</sequence>
<evidence type="ECO:0000250" key="1">
    <source>
        <dbReference type="UniProtKB" id="Q6ZQL4"/>
    </source>
</evidence>
<evidence type="ECO:0000256" key="2">
    <source>
        <dbReference type="SAM" id="MobiDB-lite"/>
    </source>
</evidence>
<evidence type="ECO:0000269" key="3">
    <source>
    </source>
</evidence>
<evidence type="ECO:0000269" key="4">
    <source>
    </source>
</evidence>
<evidence type="ECO:0000269" key="5">
    <source>
    </source>
</evidence>
<evidence type="ECO:0000269" key="6">
    <source>
    </source>
</evidence>
<evidence type="ECO:0000269" key="7">
    <source>
    </source>
</evidence>
<evidence type="ECO:0000305" key="8"/>
<evidence type="ECO:0000305" key="9">
    <source>
    </source>
</evidence>
<evidence type="ECO:0000305" key="10">
    <source>
    </source>
</evidence>
<evidence type="ECO:0000312" key="11">
    <source>
        <dbReference type="HGNC" id="HGNC:28945"/>
    </source>
</evidence>
<evidence type="ECO:0007744" key="12">
    <source>
        <dbReference type="PDB" id="7MQ8"/>
    </source>
</evidence>
<evidence type="ECO:0007744" key="13">
    <source>
        <dbReference type="PDB" id="7MQ9"/>
    </source>
</evidence>
<evidence type="ECO:0007744" key="14">
    <source>
        <dbReference type="PDB" id="7MQA"/>
    </source>
</evidence>
<evidence type="ECO:0007744" key="15">
    <source>
    </source>
</evidence>
<evidence type="ECO:0007744" key="16">
    <source>
    </source>
</evidence>
<evidence type="ECO:0007744" key="17">
    <source>
    </source>
</evidence>
<evidence type="ECO:0007744" key="18">
    <source>
    </source>
</evidence>
<evidence type="ECO:0007744" key="19">
    <source>
    </source>
</evidence>
<evidence type="ECO:0007744" key="20">
    <source>
    </source>
</evidence>
<evidence type="ECO:0007744" key="21">
    <source>
    </source>
</evidence>
<evidence type="ECO:0007744" key="22">
    <source>
    </source>
</evidence>
<gene>
    <name evidence="11" type="primary">WDR43</name>
    <name type="synonym">KIAA0007</name>
    <name type="synonym">UTP5</name>
</gene>